<accession>Q05185</accession>
<protein>
    <recommendedName>
        <fullName>4,5-dihydroxyphthalate decarboxylase</fullName>
        <shortName>DHP decarboxylase</shortName>
        <ecNumber>4.1.1.55</ecNumber>
    </recommendedName>
</protein>
<gene>
    <name type="primary">pht5</name>
</gene>
<keyword id="KW-0058">Aromatic hydrocarbons catabolism</keyword>
<keyword id="KW-0210">Decarboxylase</keyword>
<keyword id="KW-0456">Lyase</keyword>
<keyword id="KW-0614">Plasmid</keyword>
<proteinExistence type="evidence at transcript level"/>
<evidence type="ECO:0000305" key="1"/>
<dbReference type="EC" id="4.1.1.55"/>
<dbReference type="EMBL" id="D13229">
    <property type="protein sequence ID" value="BAA02513.1"/>
    <property type="molecule type" value="Genomic_DNA"/>
</dbReference>
<dbReference type="SMR" id="Q05185"/>
<dbReference type="KEGG" id="ag:BAA02513"/>
<dbReference type="UniPathway" id="UPA00726">
    <property type="reaction ID" value="UER00730"/>
</dbReference>
<dbReference type="GO" id="GO:0018796">
    <property type="term" value="F:4,5-dihydroxyphthalate decarboxylase activity"/>
    <property type="evidence" value="ECO:0007669"/>
    <property type="project" value="UniProtKB-EC"/>
</dbReference>
<dbReference type="GO" id="GO:0046239">
    <property type="term" value="P:phthalate catabolic process"/>
    <property type="evidence" value="ECO:0007669"/>
    <property type="project" value="UniProtKB-UniPathway"/>
</dbReference>
<dbReference type="Gene3D" id="3.40.190.10">
    <property type="entry name" value="Periplasmic binding protein-like II"/>
    <property type="match status" value="1"/>
</dbReference>
<dbReference type="InterPro" id="IPR015168">
    <property type="entry name" value="SsuA/THI5"/>
</dbReference>
<dbReference type="Pfam" id="PF09084">
    <property type="entry name" value="NMT1"/>
    <property type="match status" value="1"/>
</dbReference>
<dbReference type="SUPFAM" id="SSF53850">
    <property type="entry name" value="Periplasmic binding protein-like II"/>
    <property type="match status" value="1"/>
</dbReference>
<reference key="1">
    <citation type="journal article" date="1992" name="J. Ferment. Bioeng.">
        <title>Genes in PHT plasmid encoding the initial degradation pathway of phthalate in Pseudomonas putida.</title>
        <authorList>
            <person name="Nomura Y."/>
            <person name="Nakagawa M."/>
            <person name="Ogawa N."/>
            <person name="Harashima S."/>
            <person name="Oshima Y."/>
        </authorList>
    </citation>
    <scope>NUCLEOTIDE SEQUENCE [GENOMIC DNA]</scope>
    <source>
        <strain>NMH102-2</strain>
    </source>
</reference>
<name>PHT5_PSEPU</name>
<organism>
    <name type="scientific">Pseudomonas putida</name>
    <name type="common">Arthrobacter siderocapsulatus</name>
    <dbReference type="NCBI Taxonomy" id="303"/>
    <lineage>
        <taxon>Bacteria</taxon>
        <taxon>Pseudomonadati</taxon>
        <taxon>Pseudomonadota</taxon>
        <taxon>Gammaproteobacteria</taxon>
        <taxon>Pseudomonadales</taxon>
        <taxon>Pseudomonadaceae</taxon>
        <taxon>Pseudomonas</taxon>
    </lineage>
</organism>
<comment type="catalytic activity">
    <reaction>
        <text>4,5-dihydroxyphthalate + H(+) = 3,4-dihydroxybenzoate + CO2</text>
        <dbReference type="Rhea" id="RHEA:24184"/>
        <dbReference type="ChEBI" id="CHEBI:15378"/>
        <dbReference type="ChEBI" id="CHEBI:16526"/>
        <dbReference type="ChEBI" id="CHEBI:36241"/>
        <dbReference type="ChEBI" id="CHEBI:58051"/>
        <dbReference type="EC" id="4.1.1.55"/>
    </reaction>
</comment>
<comment type="pathway">
    <text>Xenobiotic degradation; phthalate degradation; 3,4-dihydroxybenzoate from phthalate: step 3/3.</text>
</comment>
<comment type="induction">
    <text>Induced by phthalate and repressed by glucose.</text>
</comment>
<comment type="similarity">
    <text evidence="1">To P.testosteroni DHP decarboxylase.</text>
</comment>
<geneLocation type="plasmid">
    <name>PHT</name>
</geneLocation>
<sequence length="258" mass="28580">MAREPIIMNKLNLSIAVGNYVRIRPLVDGEVQIDGVDPIFMLQDPEEIFFRAFRHADYDICELSLSSYSVKTAAGTSPYIAVPVFPSRAFRHTSIYIRNDRGIESAADLKGKRIGVPEYQLTANVWVRLFLEEDHGLKASDVTWVRGGYEETGRLEKIVLKLPADVIVENAPETETLSGMLASGELDAVIGPRAPSCFTQGHPKVSYLYRDPQGAASDWYRALSYSRSCTCWGSGARWPSSTLGYPGPLPKHSRSPSP</sequence>
<feature type="chain" id="PRO_0000058410" description="4,5-dihydroxyphthalate decarboxylase">
    <location>
        <begin position="1"/>
        <end position="258"/>
    </location>
</feature>